<name>SYL_METMP</name>
<evidence type="ECO:0000255" key="1">
    <source>
        <dbReference type="HAMAP-Rule" id="MF_00049"/>
    </source>
</evidence>
<protein>
    <recommendedName>
        <fullName evidence="1">Leucine--tRNA ligase</fullName>
        <ecNumber evidence="1">6.1.1.4</ecNumber>
    </recommendedName>
    <alternativeName>
        <fullName evidence="1">Leucyl-tRNA synthetase</fullName>
        <shortName evidence="1">LeuRS</shortName>
    </alternativeName>
</protein>
<keyword id="KW-0030">Aminoacyl-tRNA synthetase</keyword>
<keyword id="KW-0067">ATP-binding</keyword>
<keyword id="KW-0963">Cytoplasm</keyword>
<keyword id="KW-0436">Ligase</keyword>
<keyword id="KW-0547">Nucleotide-binding</keyword>
<keyword id="KW-0648">Protein biosynthesis</keyword>
<keyword id="KW-1185">Reference proteome</keyword>
<comment type="catalytic activity">
    <reaction evidence="1">
        <text>tRNA(Leu) + L-leucine + ATP = L-leucyl-tRNA(Leu) + AMP + diphosphate</text>
        <dbReference type="Rhea" id="RHEA:11688"/>
        <dbReference type="Rhea" id="RHEA-COMP:9613"/>
        <dbReference type="Rhea" id="RHEA-COMP:9622"/>
        <dbReference type="ChEBI" id="CHEBI:30616"/>
        <dbReference type="ChEBI" id="CHEBI:33019"/>
        <dbReference type="ChEBI" id="CHEBI:57427"/>
        <dbReference type="ChEBI" id="CHEBI:78442"/>
        <dbReference type="ChEBI" id="CHEBI:78494"/>
        <dbReference type="ChEBI" id="CHEBI:456215"/>
        <dbReference type="EC" id="6.1.1.4"/>
    </reaction>
</comment>
<comment type="subcellular location">
    <subcellularLocation>
        <location evidence="1">Cytoplasm</location>
    </subcellularLocation>
</comment>
<comment type="similarity">
    <text evidence="1">Belongs to the class-I aminoacyl-tRNA synthetase family.</text>
</comment>
<dbReference type="EC" id="6.1.1.4" evidence="1"/>
<dbReference type="EMBL" id="BX950229">
    <property type="protein sequence ID" value="CAF30253.1"/>
    <property type="molecule type" value="Genomic_DNA"/>
</dbReference>
<dbReference type="RefSeq" id="WP_011170641.1">
    <property type="nucleotide sequence ID" value="NC_005791.1"/>
</dbReference>
<dbReference type="SMR" id="Q6LZD2"/>
<dbReference type="STRING" id="267377.MMP0697"/>
<dbReference type="EnsemblBacteria" id="CAF30253">
    <property type="protein sequence ID" value="CAF30253"/>
    <property type="gene ID" value="MMP0697"/>
</dbReference>
<dbReference type="GeneID" id="2761186"/>
<dbReference type="KEGG" id="mmp:MMP0697"/>
<dbReference type="PATRIC" id="fig|267377.15.peg.714"/>
<dbReference type="eggNOG" id="arCOG00809">
    <property type="taxonomic scope" value="Archaea"/>
</dbReference>
<dbReference type="HOGENOM" id="CLU_004174_0_0_2"/>
<dbReference type="OrthoDB" id="23906at2157"/>
<dbReference type="Proteomes" id="UP000000590">
    <property type="component" value="Chromosome"/>
</dbReference>
<dbReference type="GO" id="GO:0005737">
    <property type="term" value="C:cytoplasm"/>
    <property type="evidence" value="ECO:0007669"/>
    <property type="project" value="UniProtKB-SubCell"/>
</dbReference>
<dbReference type="GO" id="GO:0002161">
    <property type="term" value="F:aminoacyl-tRNA deacylase activity"/>
    <property type="evidence" value="ECO:0007669"/>
    <property type="project" value="InterPro"/>
</dbReference>
<dbReference type="GO" id="GO:0005524">
    <property type="term" value="F:ATP binding"/>
    <property type="evidence" value="ECO:0007669"/>
    <property type="project" value="UniProtKB-UniRule"/>
</dbReference>
<dbReference type="GO" id="GO:0004823">
    <property type="term" value="F:leucine-tRNA ligase activity"/>
    <property type="evidence" value="ECO:0007669"/>
    <property type="project" value="UniProtKB-UniRule"/>
</dbReference>
<dbReference type="GO" id="GO:0006429">
    <property type="term" value="P:leucyl-tRNA aminoacylation"/>
    <property type="evidence" value="ECO:0007669"/>
    <property type="project" value="UniProtKB-UniRule"/>
</dbReference>
<dbReference type="CDD" id="cd07959">
    <property type="entry name" value="Anticodon_Ia_Leu_AEc"/>
    <property type="match status" value="1"/>
</dbReference>
<dbReference type="FunFam" id="1.10.730.10:FF:000051">
    <property type="entry name" value="Leucine--tRNA ligase"/>
    <property type="match status" value="1"/>
</dbReference>
<dbReference type="Gene3D" id="3.30.2320.20">
    <property type="entry name" value="Class I aminoacyl-tRNA synthetases (RS)"/>
    <property type="match status" value="1"/>
</dbReference>
<dbReference type="Gene3D" id="3.40.50.620">
    <property type="entry name" value="HUPs"/>
    <property type="match status" value="1"/>
</dbReference>
<dbReference type="Gene3D" id="1.10.730.10">
    <property type="entry name" value="Isoleucyl-tRNA Synthetase, Domain 1"/>
    <property type="match status" value="1"/>
</dbReference>
<dbReference type="Gene3D" id="1.10.10.720">
    <property type="entry name" value="leucyl-tRNA synthetase"/>
    <property type="match status" value="1"/>
</dbReference>
<dbReference type="Gene3D" id="3.90.740.10">
    <property type="entry name" value="Valyl/Leucyl/Isoleucyl-tRNA synthetase, editing domain"/>
    <property type="match status" value="1"/>
</dbReference>
<dbReference type="HAMAP" id="MF_00049_A">
    <property type="entry name" value="Leu_tRNA_synth_A"/>
    <property type="match status" value="1"/>
</dbReference>
<dbReference type="InterPro" id="IPR001412">
    <property type="entry name" value="aa-tRNA-synth_I_CS"/>
</dbReference>
<dbReference type="InterPro" id="IPR002300">
    <property type="entry name" value="aa-tRNA-synth_Ia"/>
</dbReference>
<dbReference type="InterPro" id="IPR020791">
    <property type="entry name" value="Leu-tRNA-lgase_arc"/>
</dbReference>
<dbReference type="InterPro" id="IPR004493">
    <property type="entry name" value="Leu-tRNA-synth_Ia_arc/euk"/>
</dbReference>
<dbReference type="InterPro" id="IPR013155">
    <property type="entry name" value="M/V/L/I-tRNA-synth_anticd-bd"/>
</dbReference>
<dbReference type="InterPro" id="IPR015413">
    <property type="entry name" value="Methionyl/Leucyl_tRNA_Synth"/>
</dbReference>
<dbReference type="InterPro" id="IPR014729">
    <property type="entry name" value="Rossmann-like_a/b/a_fold"/>
</dbReference>
<dbReference type="InterPro" id="IPR009080">
    <property type="entry name" value="tRNAsynth_Ia_anticodon-bd"/>
</dbReference>
<dbReference type="InterPro" id="IPR009008">
    <property type="entry name" value="Val/Leu/Ile-tRNA-synth_edit"/>
</dbReference>
<dbReference type="NCBIfam" id="TIGR00395">
    <property type="entry name" value="leuS_arch"/>
    <property type="match status" value="1"/>
</dbReference>
<dbReference type="NCBIfam" id="NF008957">
    <property type="entry name" value="PRK12300.1"/>
    <property type="match status" value="1"/>
</dbReference>
<dbReference type="PANTHER" id="PTHR45794:SF1">
    <property type="entry name" value="LEUCINE--TRNA LIGASE, CYTOPLASMIC"/>
    <property type="match status" value="1"/>
</dbReference>
<dbReference type="PANTHER" id="PTHR45794">
    <property type="entry name" value="LEUCYL-TRNA SYNTHETASE"/>
    <property type="match status" value="1"/>
</dbReference>
<dbReference type="Pfam" id="PF08264">
    <property type="entry name" value="Anticodon_1"/>
    <property type="match status" value="1"/>
</dbReference>
<dbReference type="Pfam" id="PF00133">
    <property type="entry name" value="tRNA-synt_1"/>
    <property type="match status" value="1"/>
</dbReference>
<dbReference type="Pfam" id="PF09334">
    <property type="entry name" value="tRNA-synt_1g"/>
    <property type="match status" value="1"/>
</dbReference>
<dbReference type="SUPFAM" id="SSF47323">
    <property type="entry name" value="Anticodon-binding domain of a subclass of class I aminoacyl-tRNA synthetases"/>
    <property type="match status" value="1"/>
</dbReference>
<dbReference type="SUPFAM" id="SSF52374">
    <property type="entry name" value="Nucleotidylyl transferase"/>
    <property type="match status" value="1"/>
</dbReference>
<dbReference type="SUPFAM" id="SSF50677">
    <property type="entry name" value="ValRS/IleRS/LeuRS editing domain"/>
    <property type="match status" value="1"/>
</dbReference>
<dbReference type="PROSITE" id="PS00178">
    <property type="entry name" value="AA_TRNA_LIGASE_I"/>
    <property type="match status" value="1"/>
</dbReference>
<feature type="chain" id="PRO_0000152134" description="Leucine--tRNA ligase">
    <location>
        <begin position="1"/>
        <end position="955"/>
    </location>
</feature>
<feature type="short sequence motif" description="'HIGH' region">
    <location>
        <begin position="51"/>
        <end position="61"/>
    </location>
</feature>
<feature type="short sequence motif" description="'KMSKS' region">
    <location>
        <begin position="647"/>
        <end position="651"/>
    </location>
</feature>
<feature type="binding site" evidence="1">
    <location>
        <position position="650"/>
    </location>
    <ligand>
        <name>ATP</name>
        <dbReference type="ChEBI" id="CHEBI:30616"/>
    </ligand>
</feature>
<sequence length="955" mass="110690">MDQKEVIGETGHKSVDLIKIMDKWQKKWTEAKIFEAEHDSRDKFFITAAFPYLNGVLHAGHLRTFTIPETIARYQRMKNKNVLWTFGFHVTGTPILGLANQIKERKEDIIWAYNNLHNIPMDELLKLNTPEAIVECFSKKATEAFKRMGFSLDWRRNFKTDDKVFSKFIEWQFYKLKEMGHITKGSHPVRYCPKCENPVEDHDLLHGEESTTVEYSLIKFTSKFDGKEIIMPMATLRPETVFGVTNAWVNPNEIYVMAEVHDEIQKLDSEDVDLKYNGIWIIGKECADKLKEQDRKIEILKEIKGSELLGLKIKNPVTKKEVPLLPADFVEMGIGTGCVMSVPAHAPYDYVALRDLGKVEEVGLIPLIEIEGYDKYPAKEIVEKLGIKDQNDEELLEQATSKIYKDEFHKGKLNENCGEYTGISVKDIKEKLTKDYINSNIAEIMYEFSEQKVVCRCGEKCIIKTVKGQWFINYSDENWKKLAHECIDNMNFAPEGIRQEFHNKVDWMKDKACARKRGLGTILPFDENWIIESLSDSTIYMAYYTIARFINEGLTPEQLIPELFDYVYLGNGNAEEIAKNSKIQAETIEEMRKEFLYYYPLDWRCSAKDLIPNHLTFMIFNHVALFGREHWPRGIEINGYVTIEGKKLSKSKGPVLPVSEVAENFGADVARFYITTCAELPQDADVKFKEMEKARDNLIKLYDLAVSVMEEESAEKELSLIDKWLLHKTYSSINSAETAYEEFQLRKIGLMFYELINDLRWYKRRGGENNSVLKEVVEIWTKLLSPVTPHLCEEIWEKLGYAGFISQEMYPVSKPELINEDLELGEEFIKSAMEDIRNIKGVAKINPEKMYLYTADDWKYDLLEFMNENAEKNVKALIPMVMKEDKFKRHGKEVMKLINEIMKIGVKKAIAEVEILENAKTFIESEFDCKVIVNGEDVKGKKKFAIPYKPAIYME</sequence>
<proteinExistence type="inferred from homology"/>
<reference key="1">
    <citation type="journal article" date="2004" name="J. Bacteriol.">
        <title>Complete genome sequence of the genetically tractable hydrogenotrophic methanogen Methanococcus maripaludis.</title>
        <authorList>
            <person name="Hendrickson E.L."/>
            <person name="Kaul R."/>
            <person name="Zhou Y."/>
            <person name="Bovee D."/>
            <person name="Chapman P."/>
            <person name="Chung J."/>
            <person name="Conway de Macario E."/>
            <person name="Dodsworth J.A."/>
            <person name="Gillett W."/>
            <person name="Graham D.E."/>
            <person name="Hackett M."/>
            <person name="Haydock A.K."/>
            <person name="Kang A."/>
            <person name="Land M.L."/>
            <person name="Levy R."/>
            <person name="Lie T.J."/>
            <person name="Major T.A."/>
            <person name="Moore B.C."/>
            <person name="Porat I."/>
            <person name="Palmeiri A."/>
            <person name="Rouse G."/>
            <person name="Saenphimmachak C."/>
            <person name="Soell D."/>
            <person name="Van Dien S."/>
            <person name="Wang T."/>
            <person name="Whitman W.B."/>
            <person name="Xia Q."/>
            <person name="Zhang Y."/>
            <person name="Larimer F.W."/>
            <person name="Olson M.V."/>
            <person name="Leigh J.A."/>
        </authorList>
    </citation>
    <scope>NUCLEOTIDE SEQUENCE [LARGE SCALE GENOMIC DNA]</scope>
    <source>
        <strain>DSM 14266 / JCM 13030 / NBRC 101832 / S2 / LL</strain>
    </source>
</reference>
<accession>Q6LZD2</accession>
<gene>
    <name evidence="1" type="primary">leuS</name>
    <name type="ordered locus">MMP0697</name>
</gene>
<organism>
    <name type="scientific">Methanococcus maripaludis (strain DSM 14266 / JCM 13030 / NBRC 101832 / S2 / LL)</name>
    <dbReference type="NCBI Taxonomy" id="267377"/>
    <lineage>
        <taxon>Archaea</taxon>
        <taxon>Methanobacteriati</taxon>
        <taxon>Methanobacteriota</taxon>
        <taxon>Methanomada group</taxon>
        <taxon>Methanococci</taxon>
        <taxon>Methanococcales</taxon>
        <taxon>Methanococcaceae</taxon>
        <taxon>Methanococcus</taxon>
    </lineage>
</organism>